<gene>
    <name type="ordered locus">BPP0286</name>
</gene>
<reference key="1">
    <citation type="journal article" date="2003" name="Nat. Genet.">
        <title>Comparative analysis of the genome sequences of Bordetella pertussis, Bordetella parapertussis and Bordetella bronchiseptica.</title>
        <authorList>
            <person name="Parkhill J."/>
            <person name="Sebaihia M."/>
            <person name="Preston A."/>
            <person name="Murphy L.D."/>
            <person name="Thomson N.R."/>
            <person name="Harris D.E."/>
            <person name="Holden M.T.G."/>
            <person name="Churcher C.M."/>
            <person name="Bentley S.D."/>
            <person name="Mungall K.L."/>
            <person name="Cerdeno-Tarraga A.-M."/>
            <person name="Temple L."/>
            <person name="James K.D."/>
            <person name="Harris B."/>
            <person name="Quail M.A."/>
            <person name="Achtman M."/>
            <person name="Atkin R."/>
            <person name="Baker S."/>
            <person name="Basham D."/>
            <person name="Bason N."/>
            <person name="Cherevach I."/>
            <person name="Chillingworth T."/>
            <person name="Collins M."/>
            <person name="Cronin A."/>
            <person name="Davis P."/>
            <person name="Doggett J."/>
            <person name="Feltwell T."/>
            <person name="Goble A."/>
            <person name="Hamlin N."/>
            <person name="Hauser H."/>
            <person name="Holroyd S."/>
            <person name="Jagels K."/>
            <person name="Leather S."/>
            <person name="Moule S."/>
            <person name="Norberczak H."/>
            <person name="O'Neil S."/>
            <person name="Ormond D."/>
            <person name="Price C."/>
            <person name="Rabbinowitsch E."/>
            <person name="Rutter S."/>
            <person name="Sanders M."/>
            <person name="Saunders D."/>
            <person name="Seeger K."/>
            <person name="Sharp S."/>
            <person name="Simmonds M."/>
            <person name="Skelton J."/>
            <person name="Squares R."/>
            <person name="Squares S."/>
            <person name="Stevens K."/>
            <person name="Unwin L."/>
            <person name="Whitehead S."/>
            <person name="Barrell B.G."/>
            <person name="Maskell D.J."/>
        </authorList>
    </citation>
    <scope>NUCLEOTIDE SEQUENCE [LARGE SCALE GENOMIC DNA]</scope>
    <source>
        <strain>12822 / ATCC BAA-587 / NCTC 13253</strain>
    </source>
</reference>
<protein>
    <recommendedName>
        <fullName evidence="1">Putative glutamate--cysteine ligase 2</fullName>
        <ecNumber evidence="1">6.3.2.2</ecNumber>
    </recommendedName>
    <alternativeName>
        <fullName evidence="1">Gamma-glutamylcysteine synthetase 2</fullName>
        <shortName evidence="1">GCS 2</shortName>
        <shortName evidence="1">Gamma-GCS 2</shortName>
    </alternativeName>
</protein>
<name>GCS2_BORPA</name>
<organism>
    <name type="scientific">Bordetella parapertussis (strain 12822 / ATCC BAA-587 / NCTC 13253)</name>
    <dbReference type="NCBI Taxonomy" id="257311"/>
    <lineage>
        <taxon>Bacteria</taxon>
        <taxon>Pseudomonadati</taxon>
        <taxon>Pseudomonadota</taxon>
        <taxon>Betaproteobacteria</taxon>
        <taxon>Burkholderiales</taxon>
        <taxon>Alcaligenaceae</taxon>
        <taxon>Bordetella</taxon>
    </lineage>
</organism>
<dbReference type="EC" id="6.3.2.2" evidence="1"/>
<dbReference type="EMBL" id="BX640423">
    <property type="protein sequence ID" value="CAE40027.1"/>
    <property type="molecule type" value="Genomic_DNA"/>
</dbReference>
<dbReference type="RefSeq" id="WP_003807407.1">
    <property type="nucleotide sequence ID" value="NC_002928.3"/>
</dbReference>
<dbReference type="SMR" id="Q7W1R5"/>
<dbReference type="KEGG" id="bpa:BPP0286"/>
<dbReference type="HOGENOM" id="CLU_044848_1_1_4"/>
<dbReference type="Proteomes" id="UP000001421">
    <property type="component" value="Chromosome"/>
</dbReference>
<dbReference type="GO" id="GO:0005524">
    <property type="term" value="F:ATP binding"/>
    <property type="evidence" value="ECO:0007669"/>
    <property type="project" value="UniProtKB-KW"/>
</dbReference>
<dbReference type="GO" id="GO:0004357">
    <property type="term" value="F:glutamate-cysteine ligase activity"/>
    <property type="evidence" value="ECO:0007669"/>
    <property type="project" value="UniProtKB-EC"/>
</dbReference>
<dbReference type="GO" id="GO:0042398">
    <property type="term" value="P:modified amino acid biosynthetic process"/>
    <property type="evidence" value="ECO:0007669"/>
    <property type="project" value="InterPro"/>
</dbReference>
<dbReference type="Gene3D" id="3.30.590.20">
    <property type="match status" value="1"/>
</dbReference>
<dbReference type="HAMAP" id="MF_01609">
    <property type="entry name" value="Glu_cys_ligase_2"/>
    <property type="match status" value="1"/>
</dbReference>
<dbReference type="InterPro" id="IPR050141">
    <property type="entry name" value="GCL_type2/YbdK_subfam"/>
</dbReference>
<dbReference type="InterPro" id="IPR006336">
    <property type="entry name" value="GCS2"/>
</dbReference>
<dbReference type="InterPro" id="IPR014746">
    <property type="entry name" value="Gln_synth/guanido_kin_cat_dom"/>
</dbReference>
<dbReference type="InterPro" id="IPR011793">
    <property type="entry name" value="YbdK"/>
</dbReference>
<dbReference type="NCBIfam" id="TIGR02050">
    <property type="entry name" value="gshA_cyan_rel"/>
    <property type="match status" value="1"/>
</dbReference>
<dbReference type="NCBIfam" id="NF010040">
    <property type="entry name" value="PRK13516.1"/>
    <property type="match status" value="1"/>
</dbReference>
<dbReference type="PANTHER" id="PTHR36510">
    <property type="entry name" value="GLUTAMATE--CYSTEINE LIGASE 2-RELATED"/>
    <property type="match status" value="1"/>
</dbReference>
<dbReference type="PANTHER" id="PTHR36510:SF1">
    <property type="entry name" value="GLUTAMATE--CYSTEINE LIGASE 2-RELATED"/>
    <property type="match status" value="1"/>
</dbReference>
<dbReference type="Pfam" id="PF04107">
    <property type="entry name" value="GCS2"/>
    <property type="match status" value="1"/>
</dbReference>
<dbReference type="SUPFAM" id="SSF55931">
    <property type="entry name" value="Glutamine synthetase/guanido kinase"/>
    <property type="match status" value="1"/>
</dbReference>
<keyword id="KW-0067">ATP-binding</keyword>
<keyword id="KW-0436">Ligase</keyword>
<keyword id="KW-0547">Nucleotide-binding</keyword>
<accession>Q7W1R5</accession>
<feature type="chain" id="PRO_0000218186" description="Putative glutamate--cysteine ligase 2">
    <location>
        <begin position="1"/>
        <end position="413"/>
    </location>
</feature>
<feature type="region of interest" description="Disordered" evidence="2">
    <location>
        <begin position="392"/>
        <end position="413"/>
    </location>
</feature>
<evidence type="ECO:0000255" key="1">
    <source>
        <dbReference type="HAMAP-Rule" id="MF_01609"/>
    </source>
</evidence>
<evidence type="ECO:0000256" key="2">
    <source>
        <dbReference type="SAM" id="MobiDB-lite"/>
    </source>
</evidence>
<sequence length="413" mass="45725">MEQIPFVSSAPNTLGIELELQLVDPRSFDLAAASDELLAQLANHPIADRVKPEITRSMIELNSSVHEHPAGLLAEMREMRDVLCEAADAVGVGVTGGGAHPFMRWQDRAISDTPRFQYLAEMYGYLARQFTVFGQHIHLGVPSGDAAVRMVRGLSPYVPHFIALSAASPYCEGVDTLFSCCRLNAVNSFPLAGHMPADVTDWYRFEAHLAQLRASGLAESIKDLYWDIRPKPEYGTVEIRVCDTPLTVERACQLAAFAQALAVQVARDPEPSQQAWLAYRSNHFQACRFGLHGSYVTPDGQRVRLVDHLRALFDRLAPVAEELGTGDMLQTLRDEILRNGNDARWLRGQFLKVRELPLVVESMAQNWRGQGVQDTPPSAVRRRIRATSEPVGGVCALSTPQGDPLPGWAERLH</sequence>
<comment type="function">
    <text evidence="1">ATP-dependent carboxylate-amine ligase which exhibits weak glutamate--cysteine ligase activity.</text>
</comment>
<comment type="catalytic activity">
    <reaction evidence="1">
        <text>L-cysteine + L-glutamate + ATP = gamma-L-glutamyl-L-cysteine + ADP + phosphate + H(+)</text>
        <dbReference type="Rhea" id="RHEA:13285"/>
        <dbReference type="ChEBI" id="CHEBI:15378"/>
        <dbReference type="ChEBI" id="CHEBI:29985"/>
        <dbReference type="ChEBI" id="CHEBI:30616"/>
        <dbReference type="ChEBI" id="CHEBI:35235"/>
        <dbReference type="ChEBI" id="CHEBI:43474"/>
        <dbReference type="ChEBI" id="CHEBI:58173"/>
        <dbReference type="ChEBI" id="CHEBI:456216"/>
        <dbReference type="EC" id="6.3.2.2"/>
    </reaction>
</comment>
<comment type="similarity">
    <text evidence="1">Belongs to the glutamate--cysteine ligase type 2 family. YbdK subfamily.</text>
</comment>
<proteinExistence type="inferred from homology"/>